<gene>
    <name evidence="1" type="primary">ureC</name>
    <name type="ordered locus">Jann_1752</name>
</gene>
<evidence type="ECO:0000255" key="1">
    <source>
        <dbReference type="HAMAP-Rule" id="MF_01953"/>
    </source>
</evidence>
<keyword id="KW-0963">Cytoplasm</keyword>
<keyword id="KW-0378">Hydrolase</keyword>
<keyword id="KW-0479">Metal-binding</keyword>
<keyword id="KW-0533">Nickel</keyword>
<keyword id="KW-1185">Reference proteome</keyword>
<organism>
    <name type="scientific">Jannaschia sp. (strain CCS1)</name>
    <dbReference type="NCBI Taxonomy" id="290400"/>
    <lineage>
        <taxon>Bacteria</taxon>
        <taxon>Pseudomonadati</taxon>
        <taxon>Pseudomonadota</taxon>
        <taxon>Alphaproteobacteria</taxon>
        <taxon>Rhodobacterales</taxon>
        <taxon>Roseobacteraceae</taxon>
        <taxon>Jannaschia</taxon>
    </lineage>
</organism>
<feature type="chain" id="PRO_0000239877" description="Urease subunit alpha">
    <location>
        <begin position="1"/>
        <end position="569"/>
    </location>
</feature>
<feature type="domain" description="Urease" evidence="1">
    <location>
        <begin position="131"/>
        <end position="569"/>
    </location>
</feature>
<feature type="active site" description="Proton donor" evidence="1">
    <location>
        <position position="322"/>
    </location>
</feature>
<feature type="binding site" evidence="1">
    <location>
        <position position="136"/>
    </location>
    <ligand>
        <name>Ni(2+)</name>
        <dbReference type="ChEBI" id="CHEBI:49786"/>
        <label>1</label>
    </ligand>
</feature>
<feature type="binding site" evidence="1">
    <location>
        <position position="138"/>
    </location>
    <ligand>
        <name>Ni(2+)</name>
        <dbReference type="ChEBI" id="CHEBI:49786"/>
        <label>1</label>
    </ligand>
</feature>
<feature type="binding site" description="via carbamate group" evidence="1">
    <location>
        <position position="219"/>
    </location>
    <ligand>
        <name>Ni(2+)</name>
        <dbReference type="ChEBI" id="CHEBI:49786"/>
        <label>1</label>
    </ligand>
</feature>
<feature type="binding site" description="via carbamate group" evidence="1">
    <location>
        <position position="219"/>
    </location>
    <ligand>
        <name>Ni(2+)</name>
        <dbReference type="ChEBI" id="CHEBI:49786"/>
        <label>2</label>
    </ligand>
</feature>
<feature type="binding site" evidence="1">
    <location>
        <position position="221"/>
    </location>
    <ligand>
        <name>substrate</name>
    </ligand>
</feature>
<feature type="binding site" evidence="1">
    <location>
        <position position="248"/>
    </location>
    <ligand>
        <name>Ni(2+)</name>
        <dbReference type="ChEBI" id="CHEBI:49786"/>
        <label>2</label>
    </ligand>
</feature>
<feature type="binding site" evidence="1">
    <location>
        <position position="274"/>
    </location>
    <ligand>
        <name>Ni(2+)</name>
        <dbReference type="ChEBI" id="CHEBI:49786"/>
        <label>2</label>
    </ligand>
</feature>
<feature type="binding site" evidence="1">
    <location>
        <position position="362"/>
    </location>
    <ligand>
        <name>Ni(2+)</name>
        <dbReference type="ChEBI" id="CHEBI:49786"/>
        <label>1</label>
    </ligand>
</feature>
<feature type="modified residue" description="N6-carboxylysine" evidence="1">
    <location>
        <position position="219"/>
    </location>
</feature>
<sequence length="569" mass="61338">MPTKIPRNDYAAMYGPTTGDRVRLADTDLIIEVERDLTTYGEEVKFGGGKVIRDGMGQSQVTRAQCAVDTVITNALIVDHSGIYKADVGLKDGRIHKIGKAGNPDTQPNVDIIIGPGTEAIAGEGRILTAGGFDAHIHFICPQQIEDSLHSGITTMLGGGTGPAHGTLATTCTPGPWHIGRMLQSLDAFPMNFGLSCKGNASQPEALVEMVSAGACAMKLHEDWGTTPGAIDCCLSVADEMDVQVMIHTDTLNESGFVENTLAAIGDRTIHAFHTEGAGGGHAPDIMKVVGYENILPSSTNPTMPYTVNTLEEHLDMLMVCHHLDKSIPEDVAFAESRIRKETIAAEDILHDMGAFSVMASDSQAMGRVGEVIIRTWQTADKMKKQRGRLAEETGDNDNARVMRYIAKYTINPALVHGMSREIGSIEEGKRADLVLWSPAFFGVKPEMSLIGGTIVMAQMGDPNASIPTPQPVYSRPMFGAFGRAVERSAVLFVSEAAQAAGIGDQLGLAKDTLAVKSTRDIRKSDMIHNSFRPDIHVDPETYDVRANGELLTCEPATDLPLAQRYFMY</sequence>
<dbReference type="EC" id="3.5.1.5" evidence="1"/>
<dbReference type="EMBL" id="CP000264">
    <property type="protein sequence ID" value="ABD54669.1"/>
    <property type="molecule type" value="Genomic_DNA"/>
</dbReference>
<dbReference type="RefSeq" id="WP_011454874.1">
    <property type="nucleotide sequence ID" value="NC_007802.1"/>
</dbReference>
<dbReference type="SMR" id="Q28RJ3"/>
<dbReference type="STRING" id="290400.Jann_1752"/>
<dbReference type="KEGG" id="jan:Jann_1752"/>
<dbReference type="eggNOG" id="COG0804">
    <property type="taxonomic scope" value="Bacteria"/>
</dbReference>
<dbReference type="HOGENOM" id="CLU_000980_0_0_5"/>
<dbReference type="OrthoDB" id="9802793at2"/>
<dbReference type="UniPathway" id="UPA00258">
    <property type="reaction ID" value="UER00370"/>
</dbReference>
<dbReference type="Proteomes" id="UP000008326">
    <property type="component" value="Chromosome"/>
</dbReference>
<dbReference type="GO" id="GO:0005737">
    <property type="term" value="C:cytoplasm"/>
    <property type="evidence" value="ECO:0007669"/>
    <property type="project" value="UniProtKB-SubCell"/>
</dbReference>
<dbReference type="GO" id="GO:0016151">
    <property type="term" value="F:nickel cation binding"/>
    <property type="evidence" value="ECO:0007669"/>
    <property type="project" value="UniProtKB-UniRule"/>
</dbReference>
<dbReference type="GO" id="GO:0009039">
    <property type="term" value="F:urease activity"/>
    <property type="evidence" value="ECO:0007669"/>
    <property type="project" value="UniProtKB-UniRule"/>
</dbReference>
<dbReference type="GO" id="GO:0043419">
    <property type="term" value="P:urea catabolic process"/>
    <property type="evidence" value="ECO:0007669"/>
    <property type="project" value="UniProtKB-UniRule"/>
</dbReference>
<dbReference type="CDD" id="cd00375">
    <property type="entry name" value="Urease_alpha"/>
    <property type="match status" value="1"/>
</dbReference>
<dbReference type="Gene3D" id="3.20.20.140">
    <property type="entry name" value="Metal-dependent hydrolases"/>
    <property type="match status" value="1"/>
</dbReference>
<dbReference type="Gene3D" id="2.30.40.10">
    <property type="entry name" value="Urease, subunit C, domain 1"/>
    <property type="match status" value="1"/>
</dbReference>
<dbReference type="HAMAP" id="MF_01953">
    <property type="entry name" value="Urease_alpha"/>
    <property type="match status" value="1"/>
</dbReference>
<dbReference type="InterPro" id="IPR006680">
    <property type="entry name" value="Amidohydro-rel"/>
</dbReference>
<dbReference type="InterPro" id="IPR011059">
    <property type="entry name" value="Metal-dep_hydrolase_composite"/>
</dbReference>
<dbReference type="InterPro" id="IPR032466">
    <property type="entry name" value="Metal_Hydrolase"/>
</dbReference>
<dbReference type="InterPro" id="IPR011612">
    <property type="entry name" value="Urease_alpha_N_dom"/>
</dbReference>
<dbReference type="InterPro" id="IPR050112">
    <property type="entry name" value="Urease_alpha_subunit"/>
</dbReference>
<dbReference type="InterPro" id="IPR017950">
    <property type="entry name" value="Urease_AS"/>
</dbReference>
<dbReference type="InterPro" id="IPR005848">
    <property type="entry name" value="Urease_asu"/>
</dbReference>
<dbReference type="InterPro" id="IPR017951">
    <property type="entry name" value="Urease_asu_c"/>
</dbReference>
<dbReference type="InterPro" id="IPR029754">
    <property type="entry name" value="Urease_Ni-bd"/>
</dbReference>
<dbReference type="NCBIfam" id="NF009686">
    <property type="entry name" value="PRK13207.1"/>
    <property type="match status" value="1"/>
</dbReference>
<dbReference type="NCBIfam" id="TIGR01792">
    <property type="entry name" value="urease_alph"/>
    <property type="match status" value="1"/>
</dbReference>
<dbReference type="PANTHER" id="PTHR43440">
    <property type="entry name" value="UREASE"/>
    <property type="match status" value="1"/>
</dbReference>
<dbReference type="PANTHER" id="PTHR43440:SF1">
    <property type="entry name" value="UREASE"/>
    <property type="match status" value="1"/>
</dbReference>
<dbReference type="Pfam" id="PF01979">
    <property type="entry name" value="Amidohydro_1"/>
    <property type="match status" value="1"/>
</dbReference>
<dbReference type="Pfam" id="PF00449">
    <property type="entry name" value="Urease_alpha"/>
    <property type="match status" value="1"/>
</dbReference>
<dbReference type="PRINTS" id="PR01752">
    <property type="entry name" value="UREASE"/>
</dbReference>
<dbReference type="SUPFAM" id="SSF51338">
    <property type="entry name" value="Composite domain of metallo-dependent hydrolases"/>
    <property type="match status" value="2"/>
</dbReference>
<dbReference type="SUPFAM" id="SSF51556">
    <property type="entry name" value="Metallo-dependent hydrolases"/>
    <property type="match status" value="1"/>
</dbReference>
<dbReference type="PROSITE" id="PS01120">
    <property type="entry name" value="UREASE_1"/>
    <property type="match status" value="1"/>
</dbReference>
<dbReference type="PROSITE" id="PS00145">
    <property type="entry name" value="UREASE_2"/>
    <property type="match status" value="1"/>
</dbReference>
<dbReference type="PROSITE" id="PS51368">
    <property type="entry name" value="UREASE_3"/>
    <property type="match status" value="1"/>
</dbReference>
<accession>Q28RJ3</accession>
<comment type="catalytic activity">
    <reaction evidence="1">
        <text>urea + 2 H2O + H(+) = hydrogencarbonate + 2 NH4(+)</text>
        <dbReference type="Rhea" id="RHEA:20557"/>
        <dbReference type="ChEBI" id="CHEBI:15377"/>
        <dbReference type="ChEBI" id="CHEBI:15378"/>
        <dbReference type="ChEBI" id="CHEBI:16199"/>
        <dbReference type="ChEBI" id="CHEBI:17544"/>
        <dbReference type="ChEBI" id="CHEBI:28938"/>
        <dbReference type="EC" id="3.5.1.5"/>
    </reaction>
</comment>
<comment type="cofactor">
    <cofactor evidence="1">
        <name>Ni cation</name>
        <dbReference type="ChEBI" id="CHEBI:25516"/>
    </cofactor>
    <text evidence="1">Binds 2 nickel ions per subunit.</text>
</comment>
<comment type="pathway">
    <text evidence="1">Nitrogen metabolism; urea degradation; CO(2) and NH(3) from urea (urease route): step 1/1.</text>
</comment>
<comment type="subunit">
    <text evidence="1">Heterotrimer of UreA (gamma), UreB (beta) and UreC (alpha) subunits. Three heterotrimers associate to form the active enzyme.</text>
</comment>
<comment type="subcellular location">
    <subcellularLocation>
        <location evidence="1">Cytoplasm</location>
    </subcellularLocation>
</comment>
<comment type="PTM">
    <text evidence="1">Carboxylation allows a single lysine to coordinate two nickel ions.</text>
</comment>
<comment type="similarity">
    <text evidence="1">Belongs to the metallo-dependent hydrolases superfamily. Urease alpha subunit family.</text>
</comment>
<reference key="1">
    <citation type="submission" date="2006-02" db="EMBL/GenBank/DDBJ databases">
        <title>Complete sequence of chromosome of Jannaschia sp. CCS1.</title>
        <authorList>
            <consortium name="US DOE Joint Genome Institute"/>
            <person name="Copeland A."/>
            <person name="Lucas S."/>
            <person name="Lapidus A."/>
            <person name="Barry K."/>
            <person name="Detter J.C."/>
            <person name="Glavina del Rio T."/>
            <person name="Hammon N."/>
            <person name="Israni S."/>
            <person name="Pitluck S."/>
            <person name="Brettin T."/>
            <person name="Bruce D."/>
            <person name="Han C."/>
            <person name="Tapia R."/>
            <person name="Gilna P."/>
            <person name="Chertkov O."/>
            <person name="Saunders E."/>
            <person name="Schmutz J."/>
            <person name="Larimer F."/>
            <person name="Land M."/>
            <person name="Kyrpides N."/>
            <person name="Lykidis A."/>
            <person name="Moran M.A."/>
            <person name="Belas R."/>
            <person name="Ye W."/>
            <person name="Buchan A."/>
            <person name="Gonzalez J.M."/>
            <person name="Schell M.A."/>
            <person name="Richardson P."/>
        </authorList>
    </citation>
    <scope>NUCLEOTIDE SEQUENCE [LARGE SCALE GENOMIC DNA]</scope>
    <source>
        <strain>CCS1</strain>
    </source>
</reference>
<name>URE1_JANSC</name>
<proteinExistence type="inferred from homology"/>
<protein>
    <recommendedName>
        <fullName evidence="1">Urease subunit alpha</fullName>
        <ecNumber evidence="1">3.5.1.5</ecNumber>
    </recommendedName>
    <alternativeName>
        <fullName evidence="1">Urea amidohydrolase subunit alpha</fullName>
    </alternativeName>
</protein>